<organism>
    <name type="scientific">Oryza sativa subsp. japonica</name>
    <name type="common">Rice</name>
    <dbReference type="NCBI Taxonomy" id="39947"/>
    <lineage>
        <taxon>Eukaryota</taxon>
        <taxon>Viridiplantae</taxon>
        <taxon>Streptophyta</taxon>
        <taxon>Embryophyta</taxon>
        <taxon>Tracheophyta</taxon>
        <taxon>Spermatophyta</taxon>
        <taxon>Magnoliopsida</taxon>
        <taxon>Liliopsida</taxon>
        <taxon>Poales</taxon>
        <taxon>Poaceae</taxon>
        <taxon>BOP clade</taxon>
        <taxon>Oryzoideae</taxon>
        <taxon>Oryzeae</taxon>
        <taxon>Oryzinae</taxon>
        <taxon>Oryza</taxon>
        <taxon>Oryza sativa</taxon>
    </lineage>
</organism>
<proteinExistence type="evidence at transcript level"/>
<reference key="1">
    <citation type="journal article" date="2005" name="Nature">
        <title>The map-based sequence of the rice genome.</title>
        <authorList>
            <consortium name="International rice genome sequencing project (IRGSP)"/>
        </authorList>
    </citation>
    <scope>NUCLEOTIDE SEQUENCE [LARGE SCALE GENOMIC DNA]</scope>
    <source>
        <strain>cv. Nipponbare</strain>
    </source>
</reference>
<reference key="2">
    <citation type="journal article" date="2008" name="Nucleic Acids Res.">
        <title>The rice annotation project database (RAP-DB): 2008 update.</title>
        <authorList>
            <consortium name="The rice annotation project (RAP)"/>
        </authorList>
    </citation>
    <scope>GENOME REANNOTATION</scope>
    <source>
        <strain>cv. Nipponbare</strain>
    </source>
</reference>
<reference key="3">
    <citation type="journal article" date="2013" name="Rice">
        <title>Improvement of the Oryza sativa Nipponbare reference genome using next generation sequence and optical map data.</title>
        <authorList>
            <person name="Kawahara Y."/>
            <person name="de la Bastide M."/>
            <person name="Hamilton J.P."/>
            <person name="Kanamori H."/>
            <person name="McCombie W.R."/>
            <person name="Ouyang S."/>
            <person name="Schwartz D.C."/>
            <person name="Tanaka T."/>
            <person name="Wu J."/>
            <person name="Zhou S."/>
            <person name="Childs K.L."/>
            <person name="Davidson R.M."/>
            <person name="Lin H."/>
            <person name="Quesada-Ocampo L."/>
            <person name="Vaillancourt B."/>
            <person name="Sakai H."/>
            <person name="Lee S.S."/>
            <person name="Kim J."/>
            <person name="Numa H."/>
            <person name="Itoh T."/>
            <person name="Buell C.R."/>
            <person name="Matsumoto T."/>
        </authorList>
    </citation>
    <scope>GENOME REANNOTATION</scope>
    <source>
        <strain>cv. Nipponbare</strain>
    </source>
</reference>
<reference key="4">
    <citation type="journal article" date="2005" name="PLoS Biol.">
        <title>The genomes of Oryza sativa: a history of duplications.</title>
        <authorList>
            <person name="Yu J."/>
            <person name="Wang J."/>
            <person name="Lin W."/>
            <person name="Li S."/>
            <person name="Li H."/>
            <person name="Zhou J."/>
            <person name="Ni P."/>
            <person name="Dong W."/>
            <person name="Hu S."/>
            <person name="Zeng C."/>
            <person name="Zhang J."/>
            <person name="Zhang Y."/>
            <person name="Li R."/>
            <person name="Xu Z."/>
            <person name="Li S."/>
            <person name="Li X."/>
            <person name="Zheng H."/>
            <person name="Cong L."/>
            <person name="Lin L."/>
            <person name="Yin J."/>
            <person name="Geng J."/>
            <person name="Li G."/>
            <person name="Shi J."/>
            <person name="Liu J."/>
            <person name="Lv H."/>
            <person name="Li J."/>
            <person name="Wang J."/>
            <person name="Deng Y."/>
            <person name="Ran L."/>
            <person name="Shi X."/>
            <person name="Wang X."/>
            <person name="Wu Q."/>
            <person name="Li C."/>
            <person name="Ren X."/>
            <person name="Wang J."/>
            <person name="Wang X."/>
            <person name="Li D."/>
            <person name="Liu D."/>
            <person name="Zhang X."/>
            <person name="Ji Z."/>
            <person name="Zhao W."/>
            <person name="Sun Y."/>
            <person name="Zhang Z."/>
            <person name="Bao J."/>
            <person name="Han Y."/>
            <person name="Dong L."/>
            <person name="Ji J."/>
            <person name="Chen P."/>
            <person name="Wu S."/>
            <person name="Liu J."/>
            <person name="Xiao Y."/>
            <person name="Bu D."/>
            <person name="Tan J."/>
            <person name="Yang L."/>
            <person name="Ye C."/>
            <person name="Zhang J."/>
            <person name="Xu J."/>
            <person name="Zhou Y."/>
            <person name="Yu Y."/>
            <person name="Zhang B."/>
            <person name="Zhuang S."/>
            <person name="Wei H."/>
            <person name="Liu B."/>
            <person name="Lei M."/>
            <person name="Yu H."/>
            <person name="Li Y."/>
            <person name="Xu H."/>
            <person name="Wei S."/>
            <person name="He X."/>
            <person name="Fang L."/>
            <person name="Zhang Z."/>
            <person name="Zhang Y."/>
            <person name="Huang X."/>
            <person name="Su Z."/>
            <person name="Tong W."/>
            <person name="Li J."/>
            <person name="Tong Z."/>
            <person name="Li S."/>
            <person name="Ye J."/>
            <person name="Wang L."/>
            <person name="Fang L."/>
            <person name="Lei T."/>
            <person name="Chen C.-S."/>
            <person name="Chen H.-C."/>
            <person name="Xu Z."/>
            <person name="Li H."/>
            <person name="Huang H."/>
            <person name="Zhang F."/>
            <person name="Xu H."/>
            <person name="Li N."/>
            <person name="Zhao C."/>
            <person name="Li S."/>
            <person name="Dong L."/>
            <person name="Huang Y."/>
            <person name="Li L."/>
            <person name="Xi Y."/>
            <person name="Qi Q."/>
            <person name="Li W."/>
            <person name="Zhang B."/>
            <person name="Hu W."/>
            <person name="Zhang Y."/>
            <person name="Tian X."/>
            <person name="Jiao Y."/>
            <person name="Liang X."/>
            <person name="Jin J."/>
            <person name="Gao L."/>
            <person name="Zheng W."/>
            <person name="Hao B."/>
            <person name="Liu S.-M."/>
            <person name="Wang W."/>
            <person name="Yuan L."/>
            <person name="Cao M."/>
            <person name="McDermott J."/>
            <person name="Samudrala R."/>
            <person name="Wang J."/>
            <person name="Wong G.K.-S."/>
            <person name="Yang H."/>
        </authorList>
    </citation>
    <scope>NUCLEOTIDE SEQUENCE [LARGE SCALE GENOMIC DNA]</scope>
    <source>
        <strain>cv. Nipponbare</strain>
    </source>
</reference>
<reference key="5">
    <citation type="journal article" date="2007" name="Gene">
        <title>Genome-wide analysis of the auxin response factors (ARF) gene family in rice (Oryza sativa).</title>
        <authorList>
            <person name="Wang D."/>
            <person name="Pei K."/>
            <person name="Fu Y."/>
            <person name="Sun Z."/>
            <person name="Li S."/>
            <person name="Liu H."/>
            <person name="Tang K."/>
            <person name="Han B."/>
            <person name="Tao Y."/>
        </authorList>
    </citation>
    <scope>GENE FAMILY</scope>
    <scope>TISSUE SPECIFICITY</scope>
    <scope>INDUCTION</scope>
    <scope>NOMENCLATURE</scope>
</reference>
<comment type="function">
    <text>Auxin response factors (ARFs) are transcriptional factors that bind specifically to the DNA sequence 5'-TGTCTC-3' found in the auxin-responsive promoter elements (AuxREs).</text>
</comment>
<comment type="subunit">
    <text evidence="1">Homodimers and heterodimers.</text>
</comment>
<comment type="subcellular location">
    <subcellularLocation>
        <location evidence="2">Nucleus</location>
    </subcellularLocation>
</comment>
<comment type="tissue specificity">
    <text evidence="5">Expressed in roots, culms, leaves and young panicles.</text>
</comment>
<comment type="induction">
    <text evidence="5">By auxin under dark condition.</text>
</comment>
<comment type="domain">
    <text>Interactions between auxin response factors (ARFs) and Aux/IAA proteins occur through their C-terminal dimerization domains III and IV.</text>
</comment>
<comment type="similarity">
    <text evidence="6">Belongs to the ARF family.</text>
</comment>
<comment type="sequence caution" evidence="6">
    <conflict type="erroneous gene model prediction">
        <sequence resource="EMBL-CDS" id="BAF18968"/>
    </conflict>
</comment>
<gene>
    <name type="primary">ARF16</name>
    <name type="ordered locus">Os06g0196700</name>
    <name type="ordered locus">LOC_Os06g09660</name>
    <name type="ORF">OsJ_019622</name>
</gene>
<sequence length="1055" mass="116861">MKDQGSSGVSPAPGEGEKKAINSELWHACAGPLVSLPPVGSLVVYFPQGHSEQVAASMHKELDNIPGYPSLPSKLICKLLSLTLHADSETDEVYAQMTLQPVNKYDRDAMLASELGLKQNKQPAEFFCKTLTASDTSTHGGFSVPRRAAEKIFPPLDFTMQPPAQELIAKDLHDISWKFRHIYRGQPKRHLLTTGWSVFVSTKRLLAGDSVLFIRDEKSQLLLGIRRATRPQPALSSSVLSSDSMHIGILAAAAHAAANSSPFTIFYNPRASPSEFVIPLAKYNKALYTQVSLGMRFRMLFETEDSGVRRYMGTITGIGDLDPVRWKNSHWRNLQVGWDESTASERRTRVSIWEIEPVATPFYICPPPFFRPKLPKQPGMPDDENEVESAFKRAMPWLADDFALKDVQSALFPGLSLVQWMAMQQNPQMLTAASQTVQSPYLNSNALAMQDVMGSSNEDPTKRLNTQAQNMVLPNLQVGSKVDHPVMSQHQQQPHQLSQQQQVQPSQQSSVVLQQHQAQLLQQNAIHLQQQQEHLQRQQSQPAQQLKAASSLHSVEQHKLKEQTSGGQVASQAQMLNQIFPPSSSQLQQLGLPKSPTHRQGLTGLPIAGSLQQPTLTQTSQVQQAAEYQQALLQSQQQQQQLQLQQLSQPEVQLQLLQKIQQQNMLSQLNPQHQSQLIQQLSQKSQEILQQQILQHQFGGSDSIGQLKQSPSQQAPLNHMTGSLTPQQLVRSHSALAESGDPSSSTAPSTSRISPINSLSRANQGSRNLTDMVATPQIDNLLQEIQSKPDNRIKNDIQSKETVPIHNRHPVSDQLDASSATSFCLDESPREGFSFPPVCLDNNVQVDPRDNFLIAENVDALMPDALLSRGMASGKGMCTLTSGQRDHRDVENELSSAAFSSQSFGVPDMSFKPGCSSDVAVTDAGMPSQGLWNNQTQRMRTFTKVQKRGSVGRSIDITRYRDYDELRHDLACMFGIQGQLEDPYRMDWKLVYVDHENDILLVGDDPWEEFVGCVKSIKILSAAEVQQMSLDGDLGGVPPQTQACSASDDANAWRG</sequence>
<feature type="chain" id="PRO_0000299274" description="Auxin response factor 16">
    <location>
        <begin position="1"/>
        <end position="1055"/>
    </location>
</feature>
<feature type="domain" description="PB1" evidence="3">
    <location>
        <begin position="940"/>
        <end position="1024"/>
    </location>
</feature>
<feature type="DNA-binding region" description="TF-B3" evidence="2">
    <location>
        <begin position="127"/>
        <end position="229"/>
    </location>
</feature>
<feature type="region of interest" description="Disordered" evidence="4">
    <location>
        <begin position="485"/>
        <end position="510"/>
    </location>
</feature>
<feature type="region of interest" description="Disordered" evidence="4">
    <location>
        <begin position="532"/>
        <end position="565"/>
    </location>
</feature>
<feature type="region of interest" description="Disordered" evidence="4">
    <location>
        <begin position="585"/>
        <end position="609"/>
    </location>
</feature>
<feature type="region of interest" description="Disordered" evidence="4">
    <location>
        <begin position="701"/>
        <end position="720"/>
    </location>
</feature>
<feature type="region of interest" description="Disordered" evidence="4">
    <location>
        <begin position="732"/>
        <end position="769"/>
    </location>
</feature>
<feature type="region of interest" description="Disordered" evidence="4">
    <location>
        <begin position="1034"/>
        <end position="1055"/>
    </location>
</feature>
<feature type="compositionally biased region" description="Low complexity" evidence="4">
    <location>
        <begin position="488"/>
        <end position="510"/>
    </location>
</feature>
<feature type="compositionally biased region" description="Low complexity" evidence="4">
    <location>
        <begin position="532"/>
        <end position="552"/>
    </location>
</feature>
<feature type="compositionally biased region" description="Low complexity" evidence="4">
    <location>
        <begin position="742"/>
        <end position="756"/>
    </location>
</feature>
<feature type="compositionally biased region" description="Polar residues" evidence="4">
    <location>
        <begin position="757"/>
        <end position="769"/>
    </location>
</feature>
<keyword id="KW-0927">Auxin signaling pathway</keyword>
<keyword id="KW-0238">DNA-binding</keyword>
<keyword id="KW-0539">Nucleus</keyword>
<keyword id="KW-1185">Reference proteome</keyword>
<keyword id="KW-0804">Transcription</keyword>
<keyword id="KW-0805">Transcription regulation</keyword>
<name>ARFP_ORYSJ</name>
<dbReference type="EMBL" id="AP008212">
    <property type="protein sequence ID" value="BAF18968.1"/>
    <property type="status" value="ALT_SEQ"/>
    <property type="molecule type" value="Genomic_DNA"/>
</dbReference>
<dbReference type="EMBL" id="AP014962">
    <property type="protein sequence ID" value="BAS96617.1"/>
    <property type="molecule type" value="Genomic_DNA"/>
</dbReference>
<dbReference type="EMBL" id="CM000143">
    <property type="protein sequence ID" value="EAZ36139.1"/>
    <property type="molecule type" value="Genomic_DNA"/>
</dbReference>
<dbReference type="RefSeq" id="XP_015643020.1">
    <property type="nucleotide sequence ID" value="XM_015787534.1"/>
</dbReference>
<dbReference type="SMR" id="A3B9A0"/>
<dbReference type="FunCoup" id="A3B9A0">
    <property type="interactions" value="2049"/>
</dbReference>
<dbReference type="STRING" id="39947.A3B9A0"/>
<dbReference type="PaxDb" id="39947-A3B9A0"/>
<dbReference type="EnsemblPlants" id="Os06t0196700-02">
    <property type="protein sequence ID" value="Os06t0196700-02"/>
    <property type="gene ID" value="Os06g0196700"/>
</dbReference>
<dbReference type="Gramene" id="Os06t0196700-02">
    <property type="protein sequence ID" value="Os06t0196700-02"/>
    <property type="gene ID" value="Os06g0196700"/>
</dbReference>
<dbReference type="eggNOG" id="ENOG502QSK9">
    <property type="taxonomic scope" value="Eukaryota"/>
</dbReference>
<dbReference type="InParanoid" id="A3B9A0"/>
<dbReference type="OrthoDB" id="1101089at2759"/>
<dbReference type="PlantReactome" id="R-OSA-5608118">
    <property type="pathway name" value="Auxin signalling"/>
</dbReference>
<dbReference type="Proteomes" id="UP000000763">
    <property type="component" value="Chromosome 6"/>
</dbReference>
<dbReference type="Proteomes" id="UP000007752">
    <property type="component" value="Chromosome 6"/>
</dbReference>
<dbReference type="Proteomes" id="UP000059680">
    <property type="component" value="Chromosome 6"/>
</dbReference>
<dbReference type="ExpressionAtlas" id="A3B9A0">
    <property type="expression patterns" value="baseline and differential"/>
</dbReference>
<dbReference type="GO" id="GO:0005634">
    <property type="term" value="C:nucleus"/>
    <property type="evidence" value="ECO:0007669"/>
    <property type="project" value="UniProtKB-SubCell"/>
</dbReference>
<dbReference type="GO" id="GO:0003677">
    <property type="term" value="F:DNA binding"/>
    <property type="evidence" value="ECO:0007669"/>
    <property type="project" value="UniProtKB-KW"/>
</dbReference>
<dbReference type="GO" id="GO:0009734">
    <property type="term" value="P:auxin-activated signaling pathway"/>
    <property type="evidence" value="ECO:0007669"/>
    <property type="project" value="UniProtKB-KW"/>
</dbReference>
<dbReference type="GO" id="GO:0006355">
    <property type="term" value="P:regulation of DNA-templated transcription"/>
    <property type="evidence" value="ECO:0007669"/>
    <property type="project" value="InterPro"/>
</dbReference>
<dbReference type="CDD" id="cd10017">
    <property type="entry name" value="B3_DNA"/>
    <property type="match status" value="1"/>
</dbReference>
<dbReference type="FunFam" id="2.30.30.1040:FF:000001">
    <property type="entry name" value="Auxin response factor"/>
    <property type="match status" value="1"/>
</dbReference>
<dbReference type="FunFam" id="2.40.330.10:FF:000001">
    <property type="entry name" value="Auxin response factor"/>
    <property type="match status" value="1"/>
</dbReference>
<dbReference type="FunFam" id="3.10.20.90:FF:000047">
    <property type="entry name" value="Auxin response factor"/>
    <property type="match status" value="1"/>
</dbReference>
<dbReference type="Gene3D" id="2.30.30.1040">
    <property type="match status" value="1"/>
</dbReference>
<dbReference type="Gene3D" id="2.40.330.10">
    <property type="entry name" value="DNA-binding pseudobarrel domain"/>
    <property type="match status" value="1"/>
</dbReference>
<dbReference type="Gene3D" id="3.10.20.90">
    <property type="entry name" value="Phosphatidylinositol 3-kinase Catalytic Subunit, Chain A, domain 1"/>
    <property type="match status" value="1"/>
</dbReference>
<dbReference type="InterPro" id="IPR010525">
    <property type="entry name" value="ARF_dom"/>
</dbReference>
<dbReference type="InterPro" id="IPR044835">
    <property type="entry name" value="ARF_plant"/>
</dbReference>
<dbReference type="InterPro" id="IPR033389">
    <property type="entry name" value="AUX/IAA_dom"/>
</dbReference>
<dbReference type="InterPro" id="IPR003340">
    <property type="entry name" value="B3_DNA-bd"/>
</dbReference>
<dbReference type="InterPro" id="IPR015300">
    <property type="entry name" value="DNA-bd_pseudobarrel_sf"/>
</dbReference>
<dbReference type="InterPro" id="IPR053793">
    <property type="entry name" value="PB1-like"/>
</dbReference>
<dbReference type="PANTHER" id="PTHR31384:SF21">
    <property type="entry name" value="AUXIN RESPONSE FACTOR 19"/>
    <property type="match status" value="1"/>
</dbReference>
<dbReference type="PANTHER" id="PTHR31384">
    <property type="entry name" value="AUXIN RESPONSE FACTOR 4-RELATED"/>
    <property type="match status" value="1"/>
</dbReference>
<dbReference type="Pfam" id="PF06507">
    <property type="entry name" value="ARF_AD"/>
    <property type="match status" value="1"/>
</dbReference>
<dbReference type="Pfam" id="PF02309">
    <property type="entry name" value="AUX_IAA"/>
    <property type="match status" value="1"/>
</dbReference>
<dbReference type="Pfam" id="PF02362">
    <property type="entry name" value="B3"/>
    <property type="match status" value="1"/>
</dbReference>
<dbReference type="SMART" id="SM01019">
    <property type="entry name" value="B3"/>
    <property type="match status" value="1"/>
</dbReference>
<dbReference type="SUPFAM" id="SSF54277">
    <property type="entry name" value="CAD &amp; PB1 domains"/>
    <property type="match status" value="1"/>
</dbReference>
<dbReference type="SUPFAM" id="SSF101936">
    <property type="entry name" value="DNA-binding pseudobarrel domain"/>
    <property type="match status" value="1"/>
</dbReference>
<dbReference type="PROSITE" id="PS50863">
    <property type="entry name" value="B3"/>
    <property type="match status" value="1"/>
</dbReference>
<dbReference type="PROSITE" id="PS51745">
    <property type="entry name" value="PB1"/>
    <property type="match status" value="1"/>
</dbReference>
<protein>
    <recommendedName>
        <fullName>Auxin response factor 16</fullName>
    </recommendedName>
</protein>
<accession>A3B9A0</accession>
<accession>A0A0N7KLP8</accession>
<accession>Q0DDV5</accession>
<evidence type="ECO:0000250" key="1"/>
<evidence type="ECO:0000255" key="2">
    <source>
        <dbReference type="PROSITE-ProRule" id="PRU00326"/>
    </source>
</evidence>
<evidence type="ECO:0000255" key="3">
    <source>
        <dbReference type="PROSITE-ProRule" id="PRU01081"/>
    </source>
</evidence>
<evidence type="ECO:0000256" key="4">
    <source>
        <dbReference type="SAM" id="MobiDB-lite"/>
    </source>
</evidence>
<evidence type="ECO:0000269" key="5">
    <source>
    </source>
</evidence>
<evidence type="ECO:0000305" key="6"/>